<organism>
    <name type="scientific">Rickettsia bellii (strain OSU 85-389)</name>
    <dbReference type="NCBI Taxonomy" id="391896"/>
    <lineage>
        <taxon>Bacteria</taxon>
        <taxon>Pseudomonadati</taxon>
        <taxon>Pseudomonadota</taxon>
        <taxon>Alphaproteobacteria</taxon>
        <taxon>Rickettsiales</taxon>
        <taxon>Rickettsiaceae</taxon>
        <taxon>Rickettsieae</taxon>
        <taxon>Rickettsia</taxon>
        <taxon>belli group</taxon>
    </lineage>
</organism>
<feature type="chain" id="PRO_1000003345" description="2-dehydro-3-deoxyphosphooctonate aldolase">
    <location>
        <begin position="1"/>
        <end position="274"/>
    </location>
</feature>
<gene>
    <name evidence="1" type="primary">kdsA</name>
    <name type="ordered locus">A1I_00825</name>
</gene>
<reference key="1">
    <citation type="submission" date="2007-09" db="EMBL/GenBank/DDBJ databases">
        <title>Complete genome sequencing of Rickettsia bellii.</title>
        <authorList>
            <person name="Madan A."/>
            <person name="Lee H."/>
            <person name="Madan A."/>
            <person name="Yoon J.-G."/>
            <person name="Ryu G.-Y."/>
            <person name="Dasch G."/>
            <person name="Ereemeva M."/>
        </authorList>
    </citation>
    <scope>NUCLEOTIDE SEQUENCE [LARGE SCALE GENOMIC DNA]</scope>
    <source>
        <strain>OSU 85-389</strain>
    </source>
</reference>
<protein>
    <recommendedName>
        <fullName evidence="1">2-dehydro-3-deoxyphosphooctonate aldolase</fullName>
        <ecNumber evidence="1">2.5.1.55</ecNumber>
    </recommendedName>
    <alternativeName>
        <fullName evidence="1">3-deoxy-D-manno-octulosonic acid 8-phosphate synthase</fullName>
    </alternativeName>
    <alternativeName>
        <fullName evidence="1">KDO-8-phosphate synthase</fullName>
        <shortName evidence="1">KDO 8-P synthase</shortName>
        <shortName evidence="1">KDOPS</shortName>
    </alternativeName>
    <alternativeName>
        <fullName evidence="1">Phospho-2-dehydro-3-deoxyoctonate aldolase</fullName>
    </alternativeName>
</protein>
<proteinExistence type="inferred from homology"/>
<name>KDSA_RICB8</name>
<accession>A8GUR8</accession>
<dbReference type="EC" id="2.5.1.55" evidence="1"/>
<dbReference type="EMBL" id="CP000849">
    <property type="protein sequence ID" value="ABV78565.1"/>
    <property type="molecule type" value="Genomic_DNA"/>
</dbReference>
<dbReference type="RefSeq" id="WP_011477995.1">
    <property type="nucleotide sequence ID" value="NC_009883.1"/>
</dbReference>
<dbReference type="SMR" id="A8GUR8"/>
<dbReference type="KEGG" id="rbo:A1I_00825"/>
<dbReference type="HOGENOM" id="CLU_036666_0_0_5"/>
<dbReference type="UniPathway" id="UPA00030"/>
<dbReference type="UniPathway" id="UPA00357">
    <property type="reaction ID" value="UER00474"/>
</dbReference>
<dbReference type="GO" id="GO:0005737">
    <property type="term" value="C:cytoplasm"/>
    <property type="evidence" value="ECO:0007669"/>
    <property type="project" value="UniProtKB-SubCell"/>
</dbReference>
<dbReference type="GO" id="GO:0008676">
    <property type="term" value="F:3-deoxy-8-phosphooctulonate synthase activity"/>
    <property type="evidence" value="ECO:0007669"/>
    <property type="project" value="UniProtKB-UniRule"/>
</dbReference>
<dbReference type="GO" id="GO:0019294">
    <property type="term" value="P:keto-3-deoxy-D-manno-octulosonic acid biosynthetic process"/>
    <property type="evidence" value="ECO:0007669"/>
    <property type="project" value="UniProtKB-UniRule"/>
</dbReference>
<dbReference type="Gene3D" id="3.20.20.70">
    <property type="entry name" value="Aldolase class I"/>
    <property type="match status" value="1"/>
</dbReference>
<dbReference type="HAMAP" id="MF_00056">
    <property type="entry name" value="KDO8P_synth"/>
    <property type="match status" value="1"/>
</dbReference>
<dbReference type="InterPro" id="IPR013785">
    <property type="entry name" value="Aldolase_TIM"/>
</dbReference>
<dbReference type="InterPro" id="IPR006218">
    <property type="entry name" value="DAHP1/KDSA"/>
</dbReference>
<dbReference type="InterPro" id="IPR006269">
    <property type="entry name" value="KDO8P_synthase"/>
</dbReference>
<dbReference type="NCBIfam" id="TIGR01362">
    <property type="entry name" value="KDO8P_synth"/>
    <property type="match status" value="1"/>
</dbReference>
<dbReference type="NCBIfam" id="NF003543">
    <property type="entry name" value="PRK05198.1"/>
    <property type="match status" value="1"/>
</dbReference>
<dbReference type="PANTHER" id="PTHR21057">
    <property type="entry name" value="PHOSPHO-2-DEHYDRO-3-DEOXYHEPTONATE ALDOLASE"/>
    <property type="match status" value="1"/>
</dbReference>
<dbReference type="Pfam" id="PF00793">
    <property type="entry name" value="DAHP_synth_1"/>
    <property type="match status" value="1"/>
</dbReference>
<dbReference type="SUPFAM" id="SSF51569">
    <property type="entry name" value="Aldolase"/>
    <property type="match status" value="1"/>
</dbReference>
<sequence>MQKIIKLKDLKIGNDLPFTLIAGPCQIEGLDHALFMAEELVKLTTRLNIPFIYKSSFDKANRTSVNGARGLGIDKGLEVLAEVKRAFNCPIVTDVHSENQCAEVAKIVDMLQIPAFLCRQTDLLQAAAATGKIVNVKKGQFLAPWDMKNVHKKLESFGAKDILLTERGTCFGYNNLVSDMRGLAIMAELNTPVIFDATHSVQQPGGLGGSTGGERKYVELLAKAAVAVGVAGLYMEVHQDPDNAPSDGPCMIRLDNLERVLTKLKKYDEITKEK</sequence>
<comment type="catalytic activity">
    <reaction evidence="1">
        <text>D-arabinose 5-phosphate + phosphoenolpyruvate + H2O = 3-deoxy-alpha-D-manno-2-octulosonate-8-phosphate + phosphate</text>
        <dbReference type="Rhea" id="RHEA:14053"/>
        <dbReference type="ChEBI" id="CHEBI:15377"/>
        <dbReference type="ChEBI" id="CHEBI:43474"/>
        <dbReference type="ChEBI" id="CHEBI:57693"/>
        <dbReference type="ChEBI" id="CHEBI:58702"/>
        <dbReference type="ChEBI" id="CHEBI:85985"/>
        <dbReference type="EC" id="2.5.1.55"/>
    </reaction>
</comment>
<comment type="pathway">
    <text evidence="1">Carbohydrate biosynthesis; 3-deoxy-D-manno-octulosonate biosynthesis; 3-deoxy-D-manno-octulosonate from D-ribulose 5-phosphate: step 2/3.</text>
</comment>
<comment type="pathway">
    <text evidence="1">Bacterial outer membrane biogenesis; lipopolysaccharide biosynthesis.</text>
</comment>
<comment type="subcellular location">
    <subcellularLocation>
        <location evidence="1">Cytoplasm</location>
    </subcellularLocation>
</comment>
<comment type="similarity">
    <text evidence="1">Belongs to the KdsA family.</text>
</comment>
<keyword id="KW-0963">Cytoplasm</keyword>
<keyword id="KW-0448">Lipopolysaccharide biosynthesis</keyword>
<keyword id="KW-0808">Transferase</keyword>
<evidence type="ECO:0000255" key="1">
    <source>
        <dbReference type="HAMAP-Rule" id="MF_00056"/>
    </source>
</evidence>